<protein>
    <recommendedName>
        <fullName evidence="1">dTDP-4-dehydrorhamnose reductase</fullName>
        <ecNumber evidence="1">1.1.1.133</ecNumber>
    </recommendedName>
    <alternativeName>
        <fullName evidence="1">dTDP-4-keto-L-rhamnose reductase</fullName>
    </alternativeName>
    <alternativeName>
        <fullName evidence="1">dTDP-6-deoxy-L-lyxo-4-hexulose reductase</fullName>
    </alternativeName>
    <alternativeName>
        <fullName evidence="1">dTDP-6-deoxy-L-mannose dehydrogenase</fullName>
    </alternativeName>
    <alternativeName>
        <fullName evidence="1">dTDP-L-rhamnose synthase</fullName>
    </alternativeName>
</protein>
<name>RMLD_MYCTO</name>
<dbReference type="EC" id="1.1.1.133" evidence="1"/>
<dbReference type="EMBL" id="AE000516">
    <property type="protein sequence ID" value="AAK47707.1"/>
    <property type="molecule type" value="Genomic_DNA"/>
</dbReference>
<dbReference type="PIR" id="C70978">
    <property type="entry name" value="C70978"/>
</dbReference>
<dbReference type="SMR" id="P9WH08"/>
<dbReference type="KEGG" id="mtc:MT3366"/>
<dbReference type="PATRIC" id="fig|83331.31.peg.3623"/>
<dbReference type="HOGENOM" id="CLU_045518_1_2_11"/>
<dbReference type="UniPathway" id="UPA00124"/>
<dbReference type="Proteomes" id="UP000001020">
    <property type="component" value="Chromosome"/>
</dbReference>
<dbReference type="GO" id="GO:0005829">
    <property type="term" value="C:cytosol"/>
    <property type="evidence" value="ECO:0007669"/>
    <property type="project" value="TreeGrafter"/>
</dbReference>
<dbReference type="GO" id="GO:0008831">
    <property type="term" value="F:dTDP-4-dehydrorhamnose reductase activity"/>
    <property type="evidence" value="ECO:0007669"/>
    <property type="project" value="UniProtKB-EC"/>
</dbReference>
<dbReference type="GO" id="GO:0046872">
    <property type="term" value="F:metal ion binding"/>
    <property type="evidence" value="ECO:0007669"/>
    <property type="project" value="UniProtKB-KW"/>
</dbReference>
<dbReference type="GO" id="GO:0019305">
    <property type="term" value="P:dTDP-rhamnose biosynthetic process"/>
    <property type="evidence" value="ECO:0007669"/>
    <property type="project" value="UniProtKB-UniPathway"/>
</dbReference>
<dbReference type="CDD" id="cd05254">
    <property type="entry name" value="dTDP_HR_like_SDR_e"/>
    <property type="match status" value="1"/>
</dbReference>
<dbReference type="Gene3D" id="3.40.50.720">
    <property type="entry name" value="NAD(P)-binding Rossmann-like Domain"/>
    <property type="match status" value="1"/>
</dbReference>
<dbReference type="Gene3D" id="3.90.25.10">
    <property type="entry name" value="UDP-galactose 4-epimerase, domain 1"/>
    <property type="match status" value="1"/>
</dbReference>
<dbReference type="InterPro" id="IPR005913">
    <property type="entry name" value="dTDP_dehydrorham_reduct"/>
</dbReference>
<dbReference type="InterPro" id="IPR036291">
    <property type="entry name" value="NAD(P)-bd_dom_sf"/>
</dbReference>
<dbReference type="InterPro" id="IPR029903">
    <property type="entry name" value="RmlD-like-bd"/>
</dbReference>
<dbReference type="NCBIfam" id="TIGR01214">
    <property type="entry name" value="rmlD"/>
    <property type="match status" value="1"/>
</dbReference>
<dbReference type="PANTHER" id="PTHR10491">
    <property type="entry name" value="DTDP-4-DEHYDRORHAMNOSE REDUCTASE"/>
    <property type="match status" value="1"/>
</dbReference>
<dbReference type="PANTHER" id="PTHR10491:SF4">
    <property type="entry name" value="METHIONINE ADENOSYLTRANSFERASE 2 SUBUNIT BETA"/>
    <property type="match status" value="1"/>
</dbReference>
<dbReference type="Pfam" id="PF04321">
    <property type="entry name" value="RmlD_sub_bind"/>
    <property type="match status" value="1"/>
</dbReference>
<dbReference type="SUPFAM" id="SSF51735">
    <property type="entry name" value="NAD(P)-binding Rossmann-fold domains"/>
    <property type="match status" value="1"/>
</dbReference>
<keyword id="KW-0119">Carbohydrate metabolism</keyword>
<keyword id="KW-0460">Magnesium</keyword>
<keyword id="KW-0479">Metal-binding</keyword>
<keyword id="KW-0520">NAD</keyword>
<keyword id="KW-0521">NADP</keyword>
<keyword id="KW-0560">Oxidoreductase</keyword>
<keyword id="KW-1185">Reference proteome</keyword>
<organism>
    <name type="scientific">Mycobacterium tuberculosis (strain CDC 1551 / Oshkosh)</name>
    <dbReference type="NCBI Taxonomy" id="83331"/>
    <lineage>
        <taxon>Bacteria</taxon>
        <taxon>Bacillati</taxon>
        <taxon>Actinomycetota</taxon>
        <taxon>Actinomycetes</taxon>
        <taxon>Mycobacteriales</taxon>
        <taxon>Mycobacteriaceae</taxon>
        <taxon>Mycobacterium</taxon>
        <taxon>Mycobacterium tuberculosis complex</taxon>
    </lineage>
</organism>
<reference key="1">
    <citation type="journal article" date="2002" name="J. Bacteriol.">
        <title>Whole-genome comparison of Mycobacterium tuberculosis clinical and laboratory strains.</title>
        <authorList>
            <person name="Fleischmann R.D."/>
            <person name="Alland D."/>
            <person name="Eisen J.A."/>
            <person name="Carpenter L."/>
            <person name="White O."/>
            <person name="Peterson J.D."/>
            <person name="DeBoy R.T."/>
            <person name="Dodson R.J."/>
            <person name="Gwinn M.L."/>
            <person name="Haft D.H."/>
            <person name="Hickey E.K."/>
            <person name="Kolonay J.F."/>
            <person name="Nelson W.C."/>
            <person name="Umayam L.A."/>
            <person name="Ermolaeva M.D."/>
            <person name="Salzberg S.L."/>
            <person name="Delcher A."/>
            <person name="Utterback T.R."/>
            <person name="Weidman J.F."/>
            <person name="Khouri H.M."/>
            <person name="Gill J."/>
            <person name="Mikula A."/>
            <person name="Bishai W."/>
            <person name="Jacobs W.R. Jr."/>
            <person name="Venter J.C."/>
            <person name="Fraser C.M."/>
        </authorList>
    </citation>
    <scope>NUCLEOTIDE SEQUENCE [LARGE SCALE GENOMIC DNA]</scope>
    <source>
        <strain>CDC 1551 / Oshkosh</strain>
    </source>
</reference>
<gene>
    <name evidence="2" type="primary">rmlD</name>
    <name type="ordered locus">MT3366</name>
</gene>
<sequence length="304" mass="32045">MAGRSERLVITGAGGQLGSHLTAQAAREGRDMLALTSSQWDITDPAAAERIIRHGDVVINCAAYTDVDGAESNEAVAYAVNATGPQHLARACARVGARLIHVSTDYVFDGDFGGAEPRPYEPTDETAPQGVYARSKLAGEQAVLAAFPEAAVVRTAWVYTGGTGKDFVAVMRRLAAGHGRVDVVDDQTGSPTYVADLAEALLALADAGVRGRVLHAANEGVVSRFGQARAVFEECGADPQRVRPVSSAQFPRPAPRSSYSALSSRQWALAGLTPLRHWRSALATALAAPANSTSIDRRLPSTRD</sequence>
<comment type="function">
    <text evidence="1 2">Involved in the biosynthesis of the dTDP-L-rhamnose which is a component of the critical linker, D-N-acetylglucosamine-L-rhamnose disaccharide, which connects the galactan region of arabinogalactan to peptidoglycan via a phosphodiester linkage (By similarity). Catalyzes the reduction of dTDP-6-deoxy-L-lyxo-4-hexulose to yield dTDP-L-rhamnose.</text>
</comment>
<comment type="catalytic activity">
    <reaction evidence="1">
        <text>dTDP-beta-L-rhamnose + NADP(+) = dTDP-4-dehydro-beta-L-rhamnose + NADPH + H(+)</text>
        <dbReference type="Rhea" id="RHEA:21796"/>
        <dbReference type="ChEBI" id="CHEBI:15378"/>
        <dbReference type="ChEBI" id="CHEBI:57510"/>
        <dbReference type="ChEBI" id="CHEBI:57783"/>
        <dbReference type="ChEBI" id="CHEBI:58349"/>
        <dbReference type="ChEBI" id="CHEBI:62830"/>
        <dbReference type="EC" id="1.1.1.133"/>
    </reaction>
</comment>
<comment type="cofactor">
    <cofactor evidence="1">
        <name>Mg(2+)</name>
        <dbReference type="ChEBI" id="CHEBI:18420"/>
    </cofactor>
    <text evidence="1">Binds 1 Mg(2+) ion per monomer.</text>
</comment>
<comment type="pathway">
    <text evidence="2">Carbohydrate biosynthesis; dTDP-L-rhamnose biosynthesis.</text>
</comment>
<comment type="similarity">
    <text evidence="3">Belongs to the dTDP-4-dehydrorhamnose reductase family.</text>
</comment>
<feature type="chain" id="PRO_0000428269" description="dTDP-4-dehydrorhamnose reductase">
    <location>
        <begin position="1"/>
        <end position="304"/>
    </location>
</feature>
<feature type="active site" description="Proton donor/acceptor" evidence="1">
    <location>
        <position position="132"/>
    </location>
</feature>
<feature type="binding site" evidence="1">
    <location>
        <begin position="15"/>
        <end position="17"/>
    </location>
    <ligand>
        <name>NADH</name>
        <dbReference type="ChEBI" id="CHEBI:57945"/>
    </ligand>
</feature>
<feature type="binding site" evidence="1">
    <location>
        <begin position="16"/>
        <end position="17"/>
    </location>
    <ligand>
        <name>NADPH</name>
        <dbReference type="ChEBI" id="CHEBI:57783"/>
    </ligand>
</feature>
<feature type="binding site" evidence="1">
    <location>
        <begin position="41"/>
        <end position="42"/>
    </location>
    <ligand>
        <name>NADH</name>
        <dbReference type="ChEBI" id="CHEBI:57945"/>
    </ligand>
</feature>
<feature type="binding site" evidence="1">
    <location>
        <begin position="41"/>
        <end position="42"/>
    </location>
    <ligand>
        <name>NADPH</name>
        <dbReference type="ChEBI" id="CHEBI:57783"/>
    </ligand>
</feature>
<feature type="binding site" evidence="1">
    <location>
        <begin position="63"/>
        <end position="65"/>
    </location>
    <ligand>
        <name>NADH</name>
        <dbReference type="ChEBI" id="CHEBI:57945"/>
    </ligand>
</feature>
<feature type="binding site" evidence="1">
    <location>
        <begin position="63"/>
        <end position="65"/>
    </location>
    <ligand>
        <name>NADPH</name>
        <dbReference type="ChEBI" id="CHEBI:57783"/>
    </ligand>
</feature>
<feature type="binding site" evidence="1">
    <location>
        <begin position="104"/>
        <end position="105"/>
    </location>
    <ligand>
        <name>dTDP-beta-L-rhamnose</name>
        <dbReference type="ChEBI" id="CHEBI:57510"/>
    </ligand>
</feature>
<feature type="binding site" evidence="1">
    <location>
        <position position="132"/>
    </location>
    <ligand>
        <name>NADH</name>
        <dbReference type="ChEBI" id="CHEBI:57945"/>
    </ligand>
</feature>
<feature type="binding site" evidence="1">
    <location>
        <position position="132"/>
    </location>
    <ligand>
        <name>NADPH</name>
        <dbReference type="ChEBI" id="CHEBI:57783"/>
    </ligand>
</feature>
<feature type="binding site" evidence="1">
    <location>
        <position position="136"/>
    </location>
    <ligand>
        <name>NADH</name>
        <dbReference type="ChEBI" id="CHEBI:57945"/>
    </ligand>
</feature>
<feature type="binding site" evidence="1">
    <location>
        <position position="136"/>
    </location>
    <ligand>
        <name>NADPH</name>
        <dbReference type="ChEBI" id="CHEBI:57783"/>
    </ligand>
</feature>
<feature type="binding site" evidence="1">
    <location>
        <position position="157"/>
    </location>
    <ligand>
        <name>dTDP-beta-L-rhamnose</name>
        <dbReference type="ChEBI" id="CHEBI:57510"/>
    </ligand>
</feature>
<feature type="site" description="Could provide a fine-tuning to achieve optimal pKa matching between active site and substrate" evidence="1">
    <location>
        <position position="104"/>
    </location>
</feature>
<proteinExistence type="inferred from homology"/>
<evidence type="ECO:0000250" key="1">
    <source>
        <dbReference type="UniProtKB" id="P26392"/>
    </source>
</evidence>
<evidence type="ECO:0000250" key="2">
    <source>
        <dbReference type="UniProtKB" id="P9WH09"/>
    </source>
</evidence>
<evidence type="ECO:0000305" key="3"/>
<accession>P9WH08</accession>
<accession>L0TEU1</accession>
<accession>P96871</accession>
<accession>Q7D5T1</accession>